<gene>
    <name type="primary">gag-pol</name>
</gene>
<sequence>MGAATSALNRRQLDKFEHIRLRPTGKKKYQIKHLIWAGKEMERFGLHERLLESEEGCKKIIEVLYPLEPTGSEGLKSLFNLVCVLFCVHKDKEVKDTEEAVAIVRQCCHLVEKERNAERNTTETSSGQKKNDKGVTVPPGGSQNFPAQQQGNAWIHVPLSPRTLNAWVKAVEEKKFGAEIVPMFQALSEGCTPYDINQMLNVLGDHQGALQIVKEIINEEAAQWDIAHPPPAGPLPAGQLRDPRGSDIAGTTSTVQEQLEWIYTANPRVDVGAIYRRWIILGLQKCVKMYNPVSVLDIRQGPKEAFKDYVDRFYKAIRAEQASGEVKQWMTESLLIQNANPDCKVILKGLGMHPTLEEMLTACQGVGGPSYKAKVMAEMMQNMQSQNMMQQGGQRGRPRPPVKCYNCGKFGHMQRQCPEPRKMRCLKCGKPGHLAKDCRGQVNFFRVWPVDGSETQKFSRRYSWGGANCAPSTESIRPCKEAPAAICRQGEAVEGTKEKTTSSESRLDRGIFFELPLWRRPIKTVYIEGVPIRALLDTGADDTIIKEADLQLSGTWKPKIIGGIGGGLNVKEYSDREVRLEDKILRGTILIGSTPINIIGRNILAPAGAKLVMGQLSEQIPITPVKLKEGARGPFLKQWPLSKEKIKALQEICDQLEKEGKISKIGGENAYNTPVFCIKKKDKSQWRMLVDFRELNKATQDFFEVQLGIPHPSGFEKMTEITVLDIGDAYYSIPLDPEFRKYTAFTIPSVNNQGPGTRYQFNCLPQGWKGSPTIFQNTAASILEEIKKELKPLTIVQYMDDLWVGSQEDEYTHDRLVEQLRMKLSAWGLETPDKKVQKKPPYEWMGYKLWPHKWQISSIELEDKEEWTVNDIQRLVGKLNWAAQLYPGLRTKNLCKLIRGKKNLLETVTWTEEAEAEYAENKEILKTEQEGTYYKPGRPIRAAVQKLEGGQWSYQFKQEGQVLKVGKYTKQKNTHTNEFRVLAGLVQKLCKESLVIWGELPVLELPIEREVWEQWWADYWQVSWIPDWEFVSTPPLVKLWYTLTKEPIPKEDVYYVDGACNRNSREGKAGYITQYGKQRVEKLENTTNQQAELMAIKMALEDSGPNVNIVTDSQYAMGILTAQPTQSDSPLIEQIIALMVQKHQIYLQWVPADKGIGGNEEIDKLVSQGMRKILFLEKIEEAQEEHERYHNNWRNLADTYGLPQIVAKEIVAMCPKCQIKGEPVHGQVDASPGVWQMDCTHLEGKVIIVAVHVASGFIEAEVIPRETGKETAKFLLKILSRWPITQLHTDNGPNFTSQEVAAMCWWGKIEHTTGVPYNPQSQGSIESMNKQLKEIIGKIRDDCQYTETAVLMACHIHNFKRKGGIGGLTPAERLINMITTQLELQHLQTKIQKILNFRVYYREGRDPVWKGPGQLIWKGEGAVVIKGGVELKEYPRRKAKIIKDYEPRKRMGDESNLEGAGGADN</sequence>
<protein>
    <recommendedName>
        <fullName>Gag-Pol polyprotein</fullName>
    </recommendedName>
    <alternativeName>
        <fullName>Pr160Gag-Pol</fullName>
    </alternativeName>
    <component>
        <recommendedName>
            <fullName>Matrix protein p17</fullName>
            <shortName>MA</shortName>
        </recommendedName>
    </component>
    <component>
        <recommendedName>
            <fullName>Capsid protein p24</fullName>
            <shortName>CA</shortName>
        </recommendedName>
    </component>
    <component>
        <recommendedName>
            <fullName>Nucleocapsid protein p7</fullName>
            <shortName>NC</shortName>
        </recommendedName>
    </component>
    <component>
        <recommendedName>
            <fullName>p6-pol</fullName>
            <shortName>p6*</shortName>
        </recommendedName>
    </component>
    <component>
        <recommendedName>
            <fullName>Protease</fullName>
            <ecNumber>3.4.23.16</ecNumber>
        </recommendedName>
        <alternativeName>
            <fullName>PR</fullName>
        </alternativeName>
        <alternativeName>
            <fullName>Retropepsin</fullName>
        </alternativeName>
    </component>
    <component>
        <recommendedName>
            <fullName>Reverse transcriptase/ribonuclease H</fullName>
            <ecNumber>2.7.7.49</ecNumber>
            <ecNumber>2.7.7.7</ecNumber>
            <ecNumber>3.1.26.13</ecNumber>
        </recommendedName>
        <alternativeName>
            <fullName>Exoribonuclease H</fullName>
            <ecNumber>3.1.13.2</ecNumber>
        </alternativeName>
        <alternativeName>
            <fullName>p66 RT</fullName>
        </alternativeName>
    </component>
    <component>
        <recommendedName>
            <fullName>p51 RT</fullName>
        </recommendedName>
    </component>
    <component>
        <recommendedName>
            <fullName>p15</fullName>
        </recommendedName>
    </component>
    <component>
        <recommendedName>
            <fullName>Integrase</fullName>
            <shortName>IN</shortName>
            <ecNumber evidence="4">2.7.7.-</ecNumber>
            <ecNumber evidence="4">3.1.-.-</ecNumber>
        </recommendedName>
    </component>
</protein>
<organismHost>
    <name type="scientific">Cercopithecidae</name>
    <name type="common">Old World monkeys</name>
    <dbReference type="NCBI Taxonomy" id="9527"/>
</organismHost>
<accession>P27980</accession>
<comment type="function">
    <text evidence="1">Gag-Pol polyprotein and Gag polyprotein may regulate their own translation, by the binding genomic RNA in the 5'-UTR. At low concentration, Gag-Pol and Gag would promote translation, whereas at high concentration, the polyproteins encapsidate genomic RNA and then shut off translation (By similarity).</text>
</comment>
<comment type="function">
    <text evidence="1">Matrix protein p17 has two main functions: in infected cell, it targets Gag and Gag-pol polyproteins to the plasma membrane via a multipartite membrane-binding signal, that includes its myristointegration complex. The myristoylation signal and the NLS exert conflicting influences its subcellular localization. The key regulation of these motifs might be phosphorylation of a portion of MA molecules on the C-terminal tyrosine at the time of virus maturation, by virion-associated cellular tyrosine kinase. Implicated in the release from host cell mediated by Vpu (By similarity).</text>
</comment>
<comment type="function">
    <text evidence="1">Capsid protein p24 forms the conical core that encapsulates the genomic RNA-nucleocapsid complex in the virion. The core is constituted by capsid protein hexamer subunits. The core is disassembled soon after virion entry. Interaction with host PPIA/CYPA protects the virus from restriction by host TRIM5-alpha and from an unknown antiviral activity in host cells. This capsid restriction by TRIM5 is one of the factors which restricts SIV to the simian species (By similarity).</text>
</comment>
<comment type="function">
    <text evidence="1">Nucleocapsid protein p7 encapsulates and protects viral dimeric unspliced (genomic) RNA. Binds these RNAs through its zinc fingers. Facilitates rearangement of nucleic acid secondary structure during retrotranscription of genomic RNA. This capability is referred to as nucleic acid chaperone activity (By similarity).</text>
</comment>
<comment type="function">
    <text evidence="10">The aspartyl protease mediates proteolytic cleavages of Gag and Gag-Pol polyproteins during or shortly after the release of the virion from the plasma membrane. Cleavages take place as an ordered, step-wise cascade to yield mature proteins. This process is called maturation. Displays maximal activity during the budding process just prior to particle release from the cell. Also cleaves Nef and Vif, probably concomitantly with viral structural proteins on maturation of virus particles. Hydrolyzes host EIF4GI and PABP1 in order to shut off the capped cellular mRNA translation. The resulting inhibition of cellular protein synthesis serves to ensure maximal viral gene expression and to evade host immune response (By similarity).</text>
</comment>
<comment type="function">
    <text evidence="1">Reverse transcriptase/ribonuclease H (RT) is a multifunctional enzyme that converts the viral dimeric RNA genome into dsDNA in the cytoplasm, shortly after virus entry into the cell. This enzyme displays a DNA polymerase activity that can copy either DNA or RNA templates, and a ribonuclease H (RNase H) activity that cleaves the RNA strand of RNA-DNA heteroduplexes in a partially processive 3' to 5' endonucleasic mode. Conversion of viral genomic RNA into dsDNA requires many steps. A tRNA binds to the primer-binding site (PBS) situated at the 5'-end of the viral RNA. RT uses the 3' end of the tRNA primer to perform a short round of RNA-dependent minus-strand DNA synthesis. The reading proceeds through the U5 region and ends after the repeated (R) region which is present at both ends of viral RNA. The portion of the RNA-DNA heteroduplex is digested by the RNase H, resulting in a ssDNA product attached to the tRNA primer. This ssDNA/tRNA hybridizes with the identical R region situated at the 3' end of viral RNA. This template exchange, known as minus-strand DNA strong stop transfer, can be either intra- or intermolecular. RT uses the 3' end of this newly synthesized short ssDNA to perform the RNA-dependent minus-strand DNA synthesis of the whole template. RNase H digests the RNA template except for two polypurine tracts (PPTs) situated at the 5'-end and near the center of the genome. It is not clear if both polymerase and RNase H activities are simultaneous. RNase H can probably proceed both in a polymerase-dependent (RNA cut into small fragments by the same RT performing DNA synthesis) and a polymerase-independent mode (cleavage of remaining RNA fragments by free RTs). Secondly, RT performs DNA-directed plus-strand DNA synthesis using the PPTs that have not been removed by RNase H as primers. PPTs and tRNA primers are then removed by RNase H. The 3' and 5' ssDNA PBS regions hybridize to form a circular dsDNA intermediate. Strand displacement synthesis by RT to the PBS and PPT ends produces a blunt ended, linear dsDNA copy of the viral genome that includes long terminal repeats (LTRs) at both ends (By similarity).</text>
</comment>
<comment type="function">
    <text evidence="1">Integrase catalyzes viral DNA integration into the host chromosome, by performing a series of DNA cutting and joining reactions. This enzyme activity takes place after virion entry into a cell and reverse transcription of the RNA genome in dsDNA. The first step in the integration process is 3' processing. This step requires a complex comprising the viral genome, matrix protein, Vpr and integrase. This complex is called the pre-integration complex (PIC). The integrase protein removes 2 nucleotides from each 3' end of the viral DNA, leaving recessed CA OH's at the 3' ends. In the second step, the PIC enters cell nucleus. This process is mediated through integrase and Vpr proteins, and allows the virus to infect a non dividing cell. This ability to enter the nucleus is specific of lentiviruses, other retroviruses cannot and rely on cell division to access cell chromosomes. In the third step, termed strand transfer, the integrase protein joins the previously processed 3' ends to the 5' ends of strands of target cellular DNA at the site of integration. The 5'-ends are produced by integrase-catalyzed staggered cuts, 5 bp apart. A Y-shaped, gapped, recombination intermediate results, with the 5'-ends of the viral DNA strands and the 3' ends of target DNA strands remaining unjoined, flanking a gap of 5 bp. The last step is viral DNA integration into host chromosome. This involves host DNA repair synthesis in which the 5 bp gaps between the unjoined strands are filled in and then ligated. Since this process occurs at both cuts flanking the SIV genome, a 5 bp duplication of host DNA is produced at the ends of SIV integration. Alternatively, Integrase may catalyze the excision of viral DNA just after strand transfer, this is termed disintegration (By similarity).</text>
</comment>
<comment type="catalytic activity">
    <reaction evidence="10">
        <text>Specific for a P1 residue that is hydrophobic, and P1' variable, but often Pro.</text>
        <dbReference type="EC" id="3.4.23.16"/>
    </reaction>
</comment>
<comment type="catalytic activity">
    <reaction>
        <text>Endohydrolysis of RNA in RNA/DNA hybrids. Three different cleavage modes: 1. sequence-specific internal cleavage of RNA. Human immunodeficiency virus type 1 and Moloney murine leukemia virus enzymes prefer to cleave the RNA strand one nucleotide away from the RNA-DNA junction. 2. RNA 5'-end directed cleavage 13-19 nucleotides from the RNA end. 3. DNA 3'-end directed cleavage 15-20 nucleotides away from the primer terminus.</text>
        <dbReference type="EC" id="3.1.26.13"/>
    </reaction>
</comment>
<comment type="catalytic activity">
    <reaction>
        <text>3'-end directed exonucleolytic cleavage of viral RNA-DNA hybrid.</text>
        <dbReference type="EC" id="3.1.13.2"/>
    </reaction>
</comment>
<comment type="catalytic activity">
    <reaction evidence="11">
        <text>DNA(n) + a 2'-deoxyribonucleoside 5'-triphosphate = DNA(n+1) + diphosphate</text>
        <dbReference type="Rhea" id="RHEA:22508"/>
        <dbReference type="Rhea" id="RHEA-COMP:17339"/>
        <dbReference type="Rhea" id="RHEA-COMP:17340"/>
        <dbReference type="ChEBI" id="CHEBI:33019"/>
        <dbReference type="ChEBI" id="CHEBI:61560"/>
        <dbReference type="ChEBI" id="CHEBI:173112"/>
        <dbReference type="EC" id="2.7.7.49"/>
    </reaction>
</comment>
<comment type="catalytic activity">
    <reaction evidence="11">
        <text>DNA(n) + a 2'-deoxyribonucleoside 5'-triphosphate = DNA(n+1) + diphosphate</text>
        <dbReference type="Rhea" id="RHEA:22508"/>
        <dbReference type="Rhea" id="RHEA-COMP:17339"/>
        <dbReference type="Rhea" id="RHEA-COMP:17340"/>
        <dbReference type="ChEBI" id="CHEBI:33019"/>
        <dbReference type="ChEBI" id="CHEBI:61560"/>
        <dbReference type="ChEBI" id="CHEBI:173112"/>
        <dbReference type="EC" id="2.7.7.7"/>
    </reaction>
</comment>
<comment type="cofactor">
    <cofactor evidence="1">
        <name>Mg(2+)</name>
        <dbReference type="ChEBI" id="CHEBI:18420"/>
    </cofactor>
    <text evidence="1">Binds 2 magnesium ions for reverse transcriptase polymerase activity.</text>
</comment>
<comment type="cofactor">
    <cofactor evidence="1">
        <name>Mg(2+)</name>
        <dbReference type="ChEBI" id="CHEBI:18420"/>
    </cofactor>
    <text evidence="1">Binds 2 magnesium ions for ribonuclease H (RNase H) activity. Substrate-binding is a precondition for magnesium binding.</text>
</comment>
<comment type="cofactor">
    <cofactor evidence="1">
        <name>Mg(2+)</name>
        <dbReference type="ChEBI" id="CHEBI:18420"/>
    </cofactor>
    <text evidence="1">Magnesium ions are required for integrase activity. Binds at least 1, maybe 2 magnesium ions.</text>
</comment>
<comment type="activity regulation">
    <text>The viral protease is inhibited by many synthetic protease inhibitors (PIs), such as amprenavir, atazanavir, indinavir, loprinavir, nelfinavir, ritonavir and saquinavir. RT can be inhibited either by nucleoside RT inhibitors (NRTIs) or by non nucleoside RT inhibitors (NNRTIs). NRTIs act as chain terminators, whereas NNRTIs inhibit DNA polymerization by binding a small hydrophobic pocket near the RT active site and inducing an allosteric change in this region. Classical NRTIs are abacavir, adefovir (PMEA), didanosine (ddI), lamivudine (3TC), stavudine (d4T), tenofovir (PMPA), zalcitabine (ddC), and zidovudine (AZT). Classical NNRTIs are atevirdine (BHAP U-87201E), delavirdine, efavirenz (DMP-266), emivirine (I-EBU), and nevirapine (BI-RG-587). The tritherapies used as a basic effective treatment of AIDS associate two NRTIs and one NNRTI. Use of protease inhibitors in tritherapy regimens permit more ambitious therapeutic strategies.</text>
</comment>
<comment type="subunit">
    <molecule>Matrix protein p17</molecule>
    <text evidence="5 6">Homotrimer. Interacts with gp41 (via C-terminus).</text>
</comment>
<comment type="subunit">
    <molecule>Protease</molecule>
    <text evidence="4 7">Homodimer. The active site consists of two apposed aspartic acid residues.</text>
</comment>
<comment type="subunit">
    <molecule>Reverse transcriptase/ribonuclease H</molecule>
    <text evidence="2">Heterodimer of p66 RT and p51 RT (RT p66/p51). Heterodimerization of RT is essential for DNA polymerase activity. Despite the sequence identities, p66 RT and p51 RT have distinct folding.</text>
</comment>
<comment type="subunit">
    <molecule>Integrase</molecule>
    <text evidence="3">Homotetramer; may further associate as a homohexadecamer (By similarity).</text>
</comment>
<comment type="subcellular location">
    <molecule>Matrix protein p17</molecule>
    <subcellularLocation>
        <location evidence="18">Virion</location>
    </subcellularLocation>
    <subcellularLocation>
        <location evidence="1">Host nucleus</location>
    </subcellularLocation>
    <subcellularLocation>
        <location evidence="1">Host cytoplasm</location>
    </subcellularLocation>
    <subcellularLocation>
        <location evidence="18">Host cell membrane</location>
        <topology evidence="18">Lipid-anchor</topology>
    </subcellularLocation>
    <text evidence="1">Following virus entry, the nuclear localization signal (NLS) of the matrix protein participates with Vpr to the nuclear localization of the viral genome. During virus production, the nuclear export activity of the matrix protein counteracts the NLS to maintain the Gag and Gag-Pol polyproteins in the cytoplasm, thereby directing unspliced RNA to the plasma membrane (By similarity).</text>
</comment>
<comment type="subcellular location">
    <molecule>Capsid protein p24</molecule>
    <subcellularLocation>
        <location evidence="18">Virion</location>
    </subcellularLocation>
</comment>
<comment type="subcellular location">
    <molecule>Nucleocapsid protein p7</molecule>
    <subcellularLocation>
        <location evidence="18">Virion</location>
    </subcellularLocation>
</comment>
<comment type="subcellular location">
    <molecule>Reverse transcriptase/ribonuclease H</molecule>
    <subcellularLocation>
        <location evidence="18">Virion</location>
    </subcellularLocation>
</comment>
<comment type="subcellular location">
    <molecule>Integrase</molecule>
    <subcellularLocation>
        <location evidence="18">Virion</location>
    </subcellularLocation>
    <subcellularLocation>
        <location evidence="18">Host nucleus</location>
    </subcellularLocation>
    <subcellularLocation>
        <location evidence="18">Host cytoplasm</location>
    </subcellularLocation>
    <text evidence="18">Nuclear at initial phase, cytoplasmic at assembly.</text>
</comment>
<comment type="alternative products">
    <event type="ribosomal frameshifting"/>
    <isoform>
        <id>P27980-1</id>
        <name>Gag-Pol polyprotein</name>
        <sequence type="displayed"/>
    </isoform>
    <isoform>
        <id>P27978-1</id>
        <name>Gag polyprotein</name>
        <sequence type="external"/>
    </isoform>
    <text>Translation results in the formation of the Gag polyprotein most of the time. Ribosomal frameshifting at the gag-pol genes boundary occurs at low frequency and produces the Gag-Pol polyprotein. This strategy of translation probably allows the virus to modulate the quantity of each viral protein. Maintenance of a correct Gag to Gag-Pol ratio is essential for RNA dimerization and viral infectivity.</text>
</comment>
<comment type="domain">
    <text evidence="1">The p66 RT is structured in five subdomains: finger, palm, thumb, connection and RNase H. Within the palm subdomain, the 'primer grip' region is thought to be involved in the positioning of the primer terminus for accommodating the incoming nucleotide. The RNase H domain stabilizes the association of RT with primer-template (By similarity).</text>
</comment>
<comment type="domain">
    <text evidence="1">The tryptophan repeat motif is involved in RT p66/p51 dimerization.</text>
</comment>
<comment type="PTM">
    <text evidence="11">Specific enzymatic cleavages by the viral protease yield mature proteins. The protease is released by autocatalytic cleavage. The polyprotein is cleaved during and after budding, this process is termed maturation. Proteolytic cleavage of p66 RT removes the RNase H domain to yield the p51 RT subunit.</text>
</comment>
<comment type="PTM">
    <text>Capsid protein p24 is phosphorylated.</text>
</comment>
<comment type="miscellaneous">
    <text>The reverse transcriptase is an error-prone enzyme that lacks a proof-reading function. High mutations rate is a direct consequence of this characteristic. RT also displays frequent template switching leading to high recombination rate. Recombination mostly occurs between homologous regions of the two copackaged RNA genomes. If these two RNA molecules derive from different viral strains, reverse transcription will give rise to highly recombinated proviral DNAs.</text>
</comment>
<comment type="miscellaneous">
    <molecule>Isoform Gag-Pol polyprotein</molecule>
    <text>Produced by -1 ribosomal frameshifting.</text>
</comment>
<feature type="initiator methionine" description="Removed; by host" evidence="1">
    <location>
        <position position="1"/>
    </location>
</feature>
<feature type="chain" id="PRO_0000305995" description="Gag-Pol polyprotein">
    <location>
        <begin position="2"/>
        <end position="1465"/>
    </location>
</feature>
<feature type="chain" id="PRO_0000305996" description="Matrix protein p17" evidence="1">
    <location>
        <begin position="2"/>
        <end position="145"/>
    </location>
</feature>
<feature type="chain" id="PRO_0000305997" description="Capsid protein p24" evidence="1">
    <location>
        <begin position="146"/>
        <end position="376"/>
    </location>
</feature>
<feature type="chain" id="PRO_0000305998" description="Nucleocapsid protein p7" evidence="1">
    <location>
        <begin position="377"/>
        <end position="443"/>
    </location>
</feature>
<feature type="chain" id="PRO_0000305999" description="p6-pol" evidence="8">
    <location>
        <begin position="444"/>
        <end position="512"/>
    </location>
</feature>
<feature type="chain" id="PRO_0000306000" description="Protease" evidence="1">
    <location>
        <begin position="513"/>
        <end position="613"/>
    </location>
</feature>
<feature type="chain" id="PRO_0000306001" description="Reverse transcriptase/ribonuclease H" evidence="1">
    <location>
        <begin position="614"/>
        <end position="1174"/>
    </location>
</feature>
<feature type="chain" id="PRO_0000306002" description="p51 RT" evidence="1">
    <location>
        <begin position="614"/>
        <end position="1054"/>
    </location>
</feature>
<feature type="chain" id="PRO_0000306003" description="p15" evidence="1">
    <location>
        <begin position="1055"/>
        <end position="1174"/>
    </location>
</feature>
<feature type="chain" id="PRO_0000306004" description="Integrase" evidence="1">
    <location>
        <begin position="1175"/>
        <end position="1465"/>
    </location>
</feature>
<feature type="domain" description="Peptidase A2" evidence="10">
    <location>
        <begin position="532"/>
        <end position="603"/>
    </location>
</feature>
<feature type="domain" description="Reverse transcriptase" evidence="11">
    <location>
        <begin position="659"/>
        <end position="849"/>
    </location>
</feature>
<feature type="domain" description="RNase H type-1" evidence="12">
    <location>
        <begin position="1048"/>
        <end position="1171"/>
    </location>
</feature>
<feature type="domain" description="Integrase catalytic" evidence="14">
    <location>
        <begin position="1228"/>
        <end position="1378"/>
    </location>
</feature>
<feature type="zinc finger region" description="CCHC-type 1" evidence="9">
    <location>
        <begin position="402"/>
        <end position="419"/>
    </location>
</feature>
<feature type="zinc finger region" description="CCHC-type 2" evidence="9">
    <location>
        <begin position="423"/>
        <end position="440"/>
    </location>
</feature>
<feature type="zinc finger region" description="Integrase-type" evidence="13">
    <location>
        <begin position="1177"/>
        <end position="1218"/>
    </location>
</feature>
<feature type="DNA-binding region" description="Integrase-type" evidence="15">
    <location>
        <begin position="1397"/>
        <end position="1444"/>
    </location>
</feature>
<feature type="region of interest" description="Disordered" evidence="17">
    <location>
        <begin position="116"/>
        <end position="144"/>
    </location>
</feature>
<feature type="region of interest" description="RT 'primer grip'" evidence="1">
    <location>
        <begin position="842"/>
        <end position="850"/>
    </location>
</feature>
<feature type="short sequence motif" description="Nuclear export signal" evidence="1">
    <location>
        <begin position="16"/>
        <end position="22"/>
    </location>
</feature>
<feature type="short sequence motif" description="Nuclear localization signal" evidence="1">
    <location>
        <begin position="26"/>
        <end position="32"/>
    </location>
</feature>
<feature type="short sequence motif" description="Tryptophan repeat motif" evidence="1">
    <location>
        <begin position="1012"/>
        <end position="1028"/>
    </location>
</feature>
<feature type="active site" description="For protease activity; shared with dimeric partner" evidence="16">
    <location>
        <position position="537"/>
    </location>
</feature>
<feature type="binding site" evidence="1">
    <location>
        <position position="725"/>
    </location>
    <ligand>
        <name>Mg(2+)</name>
        <dbReference type="ChEBI" id="CHEBI:18420"/>
        <label>1</label>
        <note>catalytic; for reverse transcriptase activity</note>
    </ligand>
</feature>
<feature type="binding site" evidence="1">
    <location>
        <position position="800"/>
    </location>
    <ligand>
        <name>Mg(2+)</name>
        <dbReference type="ChEBI" id="CHEBI:18420"/>
        <label>1</label>
        <note>catalytic; for reverse transcriptase activity</note>
    </ligand>
</feature>
<feature type="binding site" evidence="1">
    <location>
        <position position="801"/>
    </location>
    <ligand>
        <name>Mg(2+)</name>
        <dbReference type="ChEBI" id="CHEBI:18420"/>
        <label>1</label>
        <note>catalytic; for reverse transcriptase activity</note>
    </ligand>
</feature>
<feature type="binding site" evidence="1">
    <location>
        <position position="1057"/>
    </location>
    <ligand>
        <name>Mg(2+)</name>
        <dbReference type="ChEBI" id="CHEBI:18420"/>
        <label>2</label>
        <note>catalytic; for RNase H activity</note>
    </ligand>
</feature>
<feature type="binding site" evidence="1">
    <location>
        <position position="1092"/>
    </location>
    <ligand>
        <name>Mg(2+)</name>
        <dbReference type="ChEBI" id="CHEBI:18420"/>
        <label>2</label>
        <note>catalytic; for RNase H activity</note>
    </ligand>
</feature>
<feature type="binding site" evidence="1">
    <location>
        <position position="1112"/>
    </location>
    <ligand>
        <name>Mg(2+)</name>
        <dbReference type="ChEBI" id="CHEBI:18420"/>
        <label>2</label>
        <note>catalytic; for RNase H activity</note>
    </ligand>
</feature>
<feature type="binding site" evidence="1">
    <location>
        <position position="1163"/>
    </location>
    <ligand>
        <name>Mg(2+)</name>
        <dbReference type="ChEBI" id="CHEBI:18420"/>
        <label>2</label>
        <note>catalytic; for RNase H activity</note>
    </ligand>
</feature>
<feature type="binding site" evidence="13">
    <location>
        <position position="1186"/>
    </location>
    <ligand>
        <name>Zn(2+)</name>
        <dbReference type="ChEBI" id="CHEBI:29105"/>
    </ligand>
</feature>
<feature type="binding site" evidence="13">
    <location>
        <position position="1190"/>
    </location>
    <ligand>
        <name>Zn(2+)</name>
        <dbReference type="ChEBI" id="CHEBI:29105"/>
    </ligand>
</feature>
<feature type="binding site" evidence="13">
    <location>
        <position position="1214"/>
    </location>
    <ligand>
        <name>Zn(2+)</name>
        <dbReference type="ChEBI" id="CHEBI:29105"/>
    </ligand>
</feature>
<feature type="binding site" evidence="13">
    <location>
        <position position="1217"/>
    </location>
    <ligand>
        <name>Zn(2+)</name>
        <dbReference type="ChEBI" id="CHEBI:29105"/>
    </ligand>
</feature>
<feature type="binding site" evidence="1">
    <location>
        <position position="1238"/>
    </location>
    <ligand>
        <name>Mg(2+)</name>
        <dbReference type="ChEBI" id="CHEBI:18420"/>
        <label>3</label>
        <note>catalytic; for integrase activity</note>
    </ligand>
</feature>
<feature type="binding site" evidence="1">
    <location>
        <position position="1290"/>
    </location>
    <ligand>
        <name>Mg(2+)</name>
        <dbReference type="ChEBI" id="CHEBI:18420"/>
        <label>3</label>
        <note>catalytic; for integrase activity</note>
    </ligand>
</feature>
<feature type="site" description="Cleavage; by viral protease" evidence="1">
    <location>
        <begin position="145"/>
        <end position="146"/>
    </location>
</feature>
<feature type="site" description="Cis/trans isomerization of proline peptide bond; by human PPIA/CYPA" evidence="1">
    <location>
        <begin position="233"/>
        <end position="234"/>
    </location>
</feature>
<feature type="site" description="Cleavage; by viral protease" evidence="1">
    <location>
        <begin position="376"/>
        <end position="377"/>
    </location>
</feature>
<feature type="site" description="Cleavage; by viral protease" evidence="1">
    <location>
        <begin position="443"/>
        <end position="444"/>
    </location>
</feature>
<feature type="site" description="Cleavage; by viral protease" evidence="1">
    <location>
        <begin position="512"/>
        <end position="513"/>
    </location>
</feature>
<feature type="site" description="Cleavage; by viral protease" evidence="8">
    <location>
        <begin position="613"/>
        <end position="614"/>
    </location>
</feature>
<feature type="site" description="Essential for RT p66/p51 heterodimerization" evidence="1">
    <location>
        <position position="1015"/>
    </location>
</feature>
<feature type="site" description="Essential for RT p66/p51 heterodimerization" evidence="1">
    <location>
        <position position="1028"/>
    </location>
</feature>
<feature type="site" description="Cleavage; by viral protease" evidence="1">
    <location>
        <begin position="1054"/>
        <end position="1055"/>
    </location>
</feature>
<feature type="site" description="Cleavage; by viral protease" evidence="1">
    <location>
        <begin position="1174"/>
        <end position="1175"/>
    </location>
</feature>
<feature type="lipid moiety-binding region" description="N-myristoyl glycine; by host" evidence="1">
    <location>
        <position position="2"/>
    </location>
</feature>
<proteinExistence type="inferred from homology"/>
<dbReference type="EC" id="3.4.23.16"/>
<dbReference type="EC" id="2.7.7.49"/>
<dbReference type="EC" id="2.7.7.7"/>
<dbReference type="EC" id="3.1.26.13"/>
<dbReference type="EC" id="3.1.13.2"/>
<dbReference type="EC" id="2.7.7.-" evidence="4"/>
<dbReference type="EC" id="3.1.-.-" evidence="4"/>
<dbReference type="EMBL" id="M30931">
    <property type="protein sequence ID" value="AAA91914.1"/>
    <property type="molecule type" value="Genomic_RNA"/>
</dbReference>
<dbReference type="SMR" id="P27980"/>
<dbReference type="MEROPS" id="A02.003"/>
<dbReference type="PRO" id="PR:P27980"/>
<dbReference type="GO" id="GO:0043657">
    <property type="term" value="C:host cell"/>
    <property type="evidence" value="ECO:0007669"/>
    <property type="project" value="GOC"/>
</dbReference>
<dbReference type="GO" id="GO:0030430">
    <property type="term" value="C:host cell cytoplasm"/>
    <property type="evidence" value="ECO:0007669"/>
    <property type="project" value="UniProtKB-SubCell"/>
</dbReference>
<dbReference type="GO" id="GO:0042025">
    <property type="term" value="C:host cell nucleus"/>
    <property type="evidence" value="ECO:0007669"/>
    <property type="project" value="UniProtKB-SubCell"/>
</dbReference>
<dbReference type="GO" id="GO:0020002">
    <property type="term" value="C:host cell plasma membrane"/>
    <property type="evidence" value="ECO:0007669"/>
    <property type="project" value="UniProtKB-SubCell"/>
</dbReference>
<dbReference type="GO" id="GO:0016020">
    <property type="term" value="C:membrane"/>
    <property type="evidence" value="ECO:0007669"/>
    <property type="project" value="UniProtKB-KW"/>
</dbReference>
<dbReference type="GO" id="GO:0019013">
    <property type="term" value="C:viral nucleocapsid"/>
    <property type="evidence" value="ECO:0007669"/>
    <property type="project" value="UniProtKB-KW"/>
</dbReference>
<dbReference type="GO" id="GO:0004190">
    <property type="term" value="F:aspartic-type endopeptidase activity"/>
    <property type="evidence" value="ECO:0007669"/>
    <property type="project" value="UniProtKB-KW"/>
</dbReference>
<dbReference type="GO" id="GO:0003677">
    <property type="term" value="F:DNA binding"/>
    <property type="evidence" value="ECO:0007669"/>
    <property type="project" value="UniProtKB-KW"/>
</dbReference>
<dbReference type="GO" id="GO:0003887">
    <property type="term" value="F:DNA-directed DNA polymerase activity"/>
    <property type="evidence" value="ECO:0007669"/>
    <property type="project" value="UniProtKB-KW"/>
</dbReference>
<dbReference type="GO" id="GO:0004533">
    <property type="term" value="F:exoribonuclease H activity"/>
    <property type="evidence" value="ECO:0007669"/>
    <property type="project" value="UniProtKB-EC"/>
</dbReference>
<dbReference type="GO" id="GO:0035613">
    <property type="term" value="F:RNA stem-loop binding"/>
    <property type="evidence" value="ECO:0007669"/>
    <property type="project" value="TreeGrafter"/>
</dbReference>
<dbReference type="GO" id="GO:0003964">
    <property type="term" value="F:RNA-directed DNA polymerase activity"/>
    <property type="evidence" value="ECO:0007669"/>
    <property type="project" value="UniProtKB-KW"/>
</dbReference>
<dbReference type="GO" id="GO:0004523">
    <property type="term" value="F:RNA-DNA hybrid ribonuclease activity"/>
    <property type="evidence" value="ECO:0007669"/>
    <property type="project" value="InterPro"/>
</dbReference>
<dbReference type="GO" id="GO:0005198">
    <property type="term" value="F:structural molecule activity"/>
    <property type="evidence" value="ECO:0007669"/>
    <property type="project" value="InterPro"/>
</dbReference>
<dbReference type="GO" id="GO:0008270">
    <property type="term" value="F:zinc ion binding"/>
    <property type="evidence" value="ECO:0007669"/>
    <property type="project" value="UniProtKB-KW"/>
</dbReference>
<dbReference type="GO" id="GO:0015074">
    <property type="term" value="P:DNA integration"/>
    <property type="evidence" value="ECO:0007669"/>
    <property type="project" value="UniProtKB-KW"/>
</dbReference>
<dbReference type="GO" id="GO:0006310">
    <property type="term" value="P:DNA recombination"/>
    <property type="evidence" value="ECO:0007669"/>
    <property type="project" value="UniProtKB-KW"/>
</dbReference>
<dbReference type="GO" id="GO:0075713">
    <property type="term" value="P:establishment of integrated proviral latency"/>
    <property type="evidence" value="ECO:0007669"/>
    <property type="project" value="UniProtKB-KW"/>
</dbReference>
<dbReference type="GO" id="GO:0006508">
    <property type="term" value="P:proteolysis"/>
    <property type="evidence" value="ECO:0007669"/>
    <property type="project" value="UniProtKB-KW"/>
</dbReference>
<dbReference type="GO" id="GO:0046718">
    <property type="term" value="P:symbiont entry into host cell"/>
    <property type="evidence" value="ECO:0007669"/>
    <property type="project" value="UniProtKB-KW"/>
</dbReference>
<dbReference type="GO" id="GO:0039657">
    <property type="term" value="P:symbiont-mediated suppression of host gene expression"/>
    <property type="evidence" value="ECO:0007669"/>
    <property type="project" value="UniProtKB-KW"/>
</dbReference>
<dbReference type="GO" id="GO:0044826">
    <property type="term" value="P:viral genome integration into host DNA"/>
    <property type="evidence" value="ECO:0007669"/>
    <property type="project" value="UniProtKB-KW"/>
</dbReference>
<dbReference type="GO" id="GO:0075732">
    <property type="term" value="P:viral penetration into host nucleus"/>
    <property type="evidence" value="ECO:0007669"/>
    <property type="project" value="UniProtKB-KW"/>
</dbReference>
<dbReference type="GO" id="GO:0075523">
    <property type="term" value="P:viral translational frameshifting"/>
    <property type="evidence" value="ECO:0007669"/>
    <property type="project" value="UniProtKB-KW"/>
</dbReference>
<dbReference type="Gene3D" id="1.10.10.200">
    <property type="match status" value="1"/>
</dbReference>
<dbReference type="Gene3D" id="1.10.1200.30">
    <property type="match status" value="1"/>
</dbReference>
<dbReference type="Gene3D" id="3.30.70.270">
    <property type="match status" value="3"/>
</dbReference>
<dbReference type="Gene3D" id="2.40.70.10">
    <property type="entry name" value="Acid Proteases"/>
    <property type="match status" value="1"/>
</dbReference>
<dbReference type="Gene3D" id="3.10.10.10">
    <property type="entry name" value="HIV Type 1 Reverse Transcriptase, subunit A, domain 1"/>
    <property type="match status" value="1"/>
</dbReference>
<dbReference type="Gene3D" id="1.10.375.10">
    <property type="entry name" value="Human Immunodeficiency Virus Type 1 Capsid Protein"/>
    <property type="match status" value="1"/>
</dbReference>
<dbReference type="Gene3D" id="1.10.150.90">
    <property type="entry name" value="Immunodeficiency lentiviruses, gag gene matrix protein p17"/>
    <property type="match status" value="1"/>
</dbReference>
<dbReference type="Gene3D" id="2.30.30.10">
    <property type="entry name" value="Integrase, C-terminal domain superfamily, retroviral"/>
    <property type="match status" value="1"/>
</dbReference>
<dbReference type="Gene3D" id="3.30.420.10">
    <property type="entry name" value="Ribonuclease H-like superfamily/Ribonuclease H"/>
    <property type="match status" value="2"/>
</dbReference>
<dbReference type="Gene3D" id="1.20.5.760">
    <property type="entry name" value="Single helix bin"/>
    <property type="match status" value="1"/>
</dbReference>
<dbReference type="Gene3D" id="4.10.60.10">
    <property type="entry name" value="Zinc finger, CCHC-type"/>
    <property type="match status" value="1"/>
</dbReference>
<dbReference type="InterPro" id="IPR001969">
    <property type="entry name" value="Aspartic_peptidase_AS"/>
</dbReference>
<dbReference type="InterPro" id="IPR043502">
    <property type="entry name" value="DNA/RNA_pol_sf"/>
</dbReference>
<dbReference type="InterPro" id="IPR045345">
    <property type="entry name" value="Gag_p24_C"/>
</dbReference>
<dbReference type="InterPro" id="IPR017856">
    <property type="entry name" value="Integrase-like_N"/>
</dbReference>
<dbReference type="InterPro" id="IPR036862">
    <property type="entry name" value="Integrase_C_dom_sf_retrovir"/>
</dbReference>
<dbReference type="InterPro" id="IPR001037">
    <property type="entry name" value="Integrase_C_retrovir"/>
</dbReference>
<dbReference type="InterPro" id="IPR001584">
    <property type="entry name" value="Integrase_cat-core"/>
</dbReference>
<dbReference type="InterPro" id="IPR003308">
    <property type="entry name" value="Integrase_Zn-bd_dom_N"/>
</dbReference>
<dbReference type="InterPro" id="IPR000071">
    <property type="entry name" value="Lentvrl_matrix_N"/>
</dbReference>
<dbReference type="InterPro" id="IPR012344">
    <property type="entry name" value="Matrix_HIV/RSV_N"/>
</dbReference>
<dbReference type="InterPro" id="IPR001995">
    <property type="entry name" value="Peptidase_A2_cat"/>
</dbReference>
<dbReference type="InterPro" id="IPR021109">
    <property type="entry name" value="Peptidase_aspartic_dom_sf"/>
</dbReference>
<dbReference type="InterPro" id="IPR018061">
    <property type="entry name" value="Retropepsins"/>
</dbReference>
<dbReference type="InterPro" id="IPR008916">
    <property type="entry name" value="Retrov_capsid_C"/>
</dbReference>
<dbReference type="InterPro" id="IPR008919">
    <property type="entry name" value="Retrov_capsid_N"/>
</dbReference>
<dbReference type="InterPro" id="IPR010999">
    <property type="entry name" value="Retrovr_matrix"/>
</dbReference>
<dbReference type="InterPro" id="IPR043128">
    <property type="entry name" value="Rev_trsase/Diguanyl_cyclase"/>
</dbReference>
<dbReference type="InterPro" id="IPR012337">
    <property type="entry name" value="RNaseH-like_sf"/>
</dbReference>
<dbReference type="InterPro" id="IPR002156">
    <property type="entry name" value="RNaseH_domain"/>
</dbReference>
<dbReference type="InterPro" id="IPR036397">
    <property type="entry name" value="RNaseH_sf"/>
</dbReference>
<dbReference type="InterPro" id="IPR000477">
    <property type="entry name" value="RT_dom"/>
</dbReference>
<dbReference type="InterPro" id="IPR010659">
    <property type="entry name" value="RVT_connect"/>
</dbReference>
<dbReference type="InterPro" id="IPR010661">
    <property type="entry name" value="RVT_thumb"/>
</dbReference>
<dbReference type="InterPro" id="IPR001878">
    <property type="entry name" value="Znf_CCHC"/>
</dbReference>
<dbReference type="InterPro" id="IPR036875">
    <property type="entry name" value="Znf_CCHC_sf"/>
</dbReference>
<dbReference type="PANTHER" id="PTHR41694">
    <property type="entry name" value="ENDOGENOUS RETROVIRUS GROUP K MEMBER POL PROTEIN"/>
    <property type="match status" value="1"/>
</dbReference>
<dbReference type="PANTHER" id="PTHR41694:SF3">
    <property type="entry name" value="RNA-DIRECTED DNA POLYMERASE-RELATED"/>
    <property type="match status" value="1"/>
</dbReference>
<dbReference type="Pfam" id="PF00540">
    <property type="entry name" value="Gag_p17"/>
    <property type="match status" value="1"/>
</dbReference>
<dbReference type="Pfam" id="PF00607">
    <property type="entry name" value="Gag_p24"/>
    <property type="match status" value="1"/>
</dbReference>
<dbReference type="Pfam" id="PF19317">
    <property type="entry name" value="Gag_p24_C"/>
    <property type="match status" value="1"/>
</dbReference>
<dbReference type="Pfam" id="PF00552">
    <property type="entry name" value="IN_DBD_C"/>
    <property type="match status" value="1"/>
</dbReference>
<dbReference type="Pfam" id="PF02022">
    <property type="entry name" value="Integrase_Zn"/>
    <property type="match status" value="1"/>
</dbReference>
<dbReference type="Pfam" id="PF00075">
    <property type="entry name" value="RNase_H"/>
    <property type="match status" value="1"/>
</dbReference>
<dbReference type="Pfam" id="PF00665">
    <property type="entry name" value="rve"/>
    <property type="match status" value="1"/>
</dbReference>
<dbReference type="Pfam" id="PF00077">
    <property type="entry name" value="RVP"/>
    <property type="match status" value="1"/>
</dbReference>
<dbReference type="Pfam" id="PF00078">
    <property type="entry name" value="RVT_1"/>
    <property type="match status" value="1"/>
</dbReference>
<dbReference type="Pfam" id="PF06815">
    <property type="entry name" value="RVT_connect"/>
    <property type="match status" value="1"/>
</dbReference>
<dbReference type="Pfam" id="PF06817">
    <property type="entry name" value="RVT_thumb"/>
    <property type="match status" value="1"/>
</dbReference>
<dbReference type="Pfam" id="PF00098">
    <property type="entry name" value="zf-CCHC"/>
    <property type="match status" value="2"/>
</dbReference>
<dbReference type="PRINTS" id="PR00234">
    <property type="entry name" value="HIV1MATRIX"/>
</dbReference>
<dbReference type="SMART" id="SM00343">
    <property type="entry name" value="ZnF_C2HC"/>
    <property type="match status" value="2"/>
</dbReference>
<dbReference type="SUPFAM" id="SSF50630">
    <property type="entry name" value="Acid proteases"/>
    <property type="match status" value="1"/>
</dbReference>
<dbReference type="SUPFAM" id="SSF50122">
    <property type="entry name" value="DNA-binding domain of retroviral integrase"/>
    <property type="match status" value="1"/>
</dbReference>
<dbReference type="SUPFAM" id="SSF56672">
    <property type="entry name" value="DNA/RNA polymerases"/>
    <property type="match status" value="1"/>
</dbReference>
<dbReference type="SUPFAM" id="SSF46919">
    <property type="entry name" value="N-terminal Zn binding domain of HIV integrase"/>
    <property type="match status" value="1"/>
</dbReference>
<dbReference type="SUPFAM" id="SSF47836">
    <property type="entry name" value="Retroviral matrix proteins"/>
    <property type="match status" value="1"/>
</dbReference>
<dbReference type="SUPFAM" id="SSF47353">
    <property type="entry name" value="Retrovirus capsid dimerization domain-like"/>
    <property type="match status" value="1"/>
</dbReference>
<dbReference type="SUPFAM" id="SSF47943">
    <property type="entry name" value="Retrovirus capsid protein, N-terminal core domain"/>
    <property type="match status" value="1"/>
</dbReference>
<dbReference type="SUPFAM" id="SSF57756">
    <property type="entry name" value="Retrovirus zinc finger-like domains"/>
    <property type="match status" value="1"/>
</dbReference>
<dbReference type="SUPFAM" id="SSF53098">
    <property type="entry name" value="Ribonuclease H-like"/>
    <property type="match status" value="2"/>
</dbReference>
<dbReference type="PROSITE" id="PS50175">
    <property type="entry name" value="ASP_PROT_RETROV"/>
    <property type="match status" value="1"/>
</dbReference>
<dbReference type="PROSITE" id="PS00141">
    <property type="entry name" value="ASP_PROTEASE"/>
    <property type="match status" value="1"/>
</dbReference>
<dbReference type="PROSITE" id="PS50994">
    <property type="entry name" value="INTEGRASE"/>
    <property type="match status" value="1"/>
</dbReference>
<dbReference type="PROSITE" id="PS51027">
    <property type="entry name" value="INTEGRASE_DBD"/>
    <property type="match status" value="1"/>
</dbReference>
<dbReference type="PROSITE" id="PS50879">
    <property type="entry name" value="RNASE_H_1"/>
    <property type="match status" value="1"/>
</dbReference>
<dbReference type="PROSITE" id="PS50878">
    <property type="entry name" value="RT_POL"/>
    <property type="match status" value="1"/>
</dbReference>
<dbReference type="PROSITE" id="PS50158">
    <property type="entry name" value="ZF_CCHC"/>
    <property type="match status" value="2"/>
</dbReference>
<dbReference type="PROSITE" id="PS50876">
    <property type="entry name" value="ZF_INTEGRASE"/>
    <property type="match status" value="1"/>
</dbReference>
<name>POL_SIVVG</name>
<reference key="1">
    <citation type="journal article" date="1990" name="Virology">
        <title>Complete nucleotide sequence of a simian immunodeficiency virus from African green monkeys: a novel type of intragroup divergence.</title>
        <authorList>
            <person name="Baier M."/>
            <person name="Garber C."/>
            <person name="Mueller C."/>
            <person name="Cichutek K."/>
            <person name="Kurth R."/>
        </authorList>
    </citation>
    <scope>NUCLEOTIDE SEQUENCE [GENOMIC RNA]</scope>
</reference>
<organism>
    <name type="scientific">Simian immunodeficiency virus agm.vervet (isolate AGM3)</name>
    <name type="common">SIV-agm.ver</name>
    <name type="synonym">Simian immunodeficiency virus African green monkey vervet</name>
    <dbReference type="NCBI Taxonomy" id="11730"/>
    <lineage>
        <taxon>Viruses</taxon>
        <taxon>Riboviria</taxon>
        <taxon>Pararnavirae</taxon>
        <taxon>Artverviricota</taxon>
        <taxon>Revtraviricetes</taxon>
        <taxon>Ortervirales</taxon>
        <taxon>Retroviridae</taxon>
        <taxon>Orthoretrovirinae</taxon>
        <taxon>Lentivirus</taxon>
        <taxon>Simian immunodeficiency virus</taxon>
    </lineage>
</organism>
<keyword id="KW-0064">Aspartyl protease</keyword>
<keyword id="KW-0167">Capsid protein</keyword>
<keyword id="KW-0229">DNA integration</keyword>
<keyword id="KW-0233">DNA recombination</keyword>
<keyword id="KW-0238">DNA-binding</keyword>
<keyword id="KW-0239">DNA-directed DNA polymerase</keyword>
<keyword id="KW-0255">Endonuclease</keyword>
<keyword id="KW-1262">Eukaryotic host gene expression shutoff by virus</keyword>
<keyword id="KW-1193">Eukaryotic host translation shutoff by virus</keyword>
<keyword id="KW-1032">Host cell membrane</keyword>
<keyword id="KW-1035">Host cytoplasm</keyword>
<keyword id="KW-1190">Host gene expression shutoff by virus</keyword>
<keyword id="KW-1043">Host membrane</keyword>
<keyword id="KW-1048">Host nucleus</keyword>
<keyword id="KW-0945">Host-virus interaction</keyword>
<keyword id="KW-0378">Hydrolase</keyword>
<keyword id="KW-0449">Lipoprotein</keyword>
<keyword id="KW-0460">Magnesium</keyword>
<keyword id="KW-0472">Membrane</keyword>
<keyword id="KW-0479">Metal-binding</keyword>
<keyword id="KW-0511">Multifunctional enzyme</keyword>
<keyword id="KW-0519">Myristate</keyword>
<keyword id="KW-0540">Nuclease</keyword>
<keyword id="KW-0548">Nucleotidyltransferase</keyword>
<keyword id="KW-0597">Phosphoprotein</keyword>
<keyword id="KW-0645">Protease</keyword>
<keyword id="KW-0677">Repeat</keyword>
<keyword id="KW-0688">Ribosomal frameshifting</keyword>
<keyword id="KW-0694">RNA-binding</keyword>
<keyword id="KW-0695">RNA-directed DNA polymerase</keyword>
<keyword id="KW-0808">Transferase</keyword>
<keyword id="KW-1179">Viral genome integration</keyword>
<keyword id="KW-0543">Viral nucleoprotein</keyword>
<keyword id="KW-1163">Viral penetration into host nucleus</keyword>
<keyword id="KW-1188">Viral release from host cell</keyword>
<keyword id="KW-0946">Virion</keyword>
<keyword id="KW-0917">Virion maturation</keyword>
<keyword id="KW-1160">Virus entry into host cell</keyword>
<keyword id="KW-0862">Zinc</keyword>
<keyword id="KW-0863">Zinc-finger</keyword>
<evidence type="ECO:0000250" key="1"/>
<evidence type="ECO:0000250" key="2">
    <source>
        <dbReference type="UniProtKB" id="P03366"/>
    </source>
</evidence>
<evidence type="ECO:0000250" key="3">
    <source>
        <dbReference type="UniProtKB" id="P03367"/>
    </source>
</evidence>
<evidence type="ECO:0000250" key="4">
    <source>
        <dbReference type="UniProtKB" id="P04585"/>
    </source>
</evidence>
<evidence type="ECO:0000250" key="5">
    <source>
        <dbReference type="UniProtKB" id="P04591"/>
    </source>
</evidence>
<evidence type="ECO:0000250" key="6">
    <source>
        <dbReference type="UniProtKB" id="P12493"/>
    </source>
</evidence>
<evidence type="ECO:0000250" key="7">
    <source>
        <dbReference type="UniProtKB" id="P12497"/>
    </source>
</evidence>
<evidence type="ECO:0000255" key="8"/>
<evidence type="ECO:0000255" key="9">
    <source>
        <dbReference type="PROSITE-ProRule" id="PRU00047"/>
    </source>
</evidence>
<evidence type="ECO:0000255" key="10">
    <source>
        <dbReference type="PROSITE-ProRule" id="PRU00275"/>
    </source>
</evidence>
<evidence type="ECO:0000255" key="11">
    <source>
        <dbReference type="PROSITE-ProRule" id="PRU00405"/>
    </source>
</evidence>
<evidence type="ECO:0000255" key="12">
    <source>
        <dbReference type="PROSITE-ProRule" id="PRU00408"/>
    </source>
</evidence>
<evidence type="ECO:0000255" key="13">
    <source>
        <dbReference type="PROSITE-ProRule" id="PRU00450"/>
    </source>
</evidence>
<evidence type="ECO:0000255" key="14">
    <source>
        <dbReference type="PROSITE-ProRule" id="PRU00457"/>
    </source>
</evidence>
<evidence type="ECO:0000255" key="15">
    <source>
        <dbReference type="PROSITE-ProRule" id="PRU00506"/>
    </source>
</evidence>
<evidence type="ECO:0000255" key="16">
    <source>
        <dbReference type="PROSITE-ProRule" id="PRU10094"/>
    </source>
</evidence>
<evidence type="ECO:0000256" key="17">
    <source>
        <dbReference type="SAM" id="MobiDB-lite"/>
    </source>
</evidence>
<evidence type="ECO:0000305" key="18"/>